<proteinExistence type="inferred from homology"/>
<comment type="function">
    <text evidence="1">Specifically methylates guanosine-37 in various tRNAs.</text>
</comment>
<comment type="catalytic activity">
    <reaction evidence="1">
        <text>guanosine(37) in tRNA + S-adenosyl-L-methionine = N(1)-methylguanosine(37) in tRNA + S-adenosyl-L-homocysteine + H(+)</text>
        <dbReference type="Rhea" id="RHEA:36899"/>
        <dbReference type="Rhea" id="RHEA-COMP:10145"/>
        <dbReference type="Rhea" id="RHEA-COMP:10147"/>
        <dbReference type="ChEBI" id="CHEBI:15378"/>
        <dbReference type="ChEBI" id="CHEBI:57856"/>
        <dbReference type="ChEBI" id="CHEBI:59789"/>
        <dbReference type="ChEBI" id="CHEBI:73542"/>
        <dbReference type="ChEBI" id="CHEBI:74269"/>
        <dbReference type="EC" id="2.1.1.228"/>
    </reaction>
</comment>
<comment type="subunit">
    <text evidence="1">Homodimer.</text>
</comment>
<comment type="subcellular location">
    <subcellularLocation>
        <location evidence="1">Cytoplasm</location>
    </subcellularLocation>
</comment>
<comment type="similarity">
    <text evidence="1">Belongs to the RNA methyltransferase TrmD family.</text>
</comment>
<dbReference type="EC" id="2.1.1.228" evidence="1"/>
<dbReference type="EMBL" id="AP008937">
    <property type="protein sequence ID" value="BAG27557.1"/>
    <property type="molecule type" value="Genomic_DNA"/>
</dbReference>
<dbReference type="RefSeq" id="WP_003683893.1">
    <property type="nucleotide sequence ID" value="NC_010610.1"/>
</dbReference>
<dbReference type="SMR" id="B2GD25"/>
<dbReference type="GeneID" id="83714331"/>
<dbReference type="KEGG" id="lfe:LAF_1221"/>
<dbReference type="eggNOG" id="COG0336">
    <property type="taxonomic scope" value="Bacteria"/>
</dbReference>
<dbReference type="HOGENOM" id="CLU_047363_0_1_9"/>
<dbReference type="Proteomes" id="UP000001697">
    <property type="component" value="Chromosome"/>
</dbReference>
<dbReference type="GO" id="GO:0005829">
    <property type="term" value="C:cytosol"/>
    <property type="evidence" value="ECO:0007669"/>
    <property type="project" value="TreeGrafter"/>
</dbReference>
<dbReference type="GO" id="GO:0052906">
    <property type="term" value="F:tRNA (guanine(37)-N1)-methyltransferase activity"/>
    <property type="evidence" value="ECO:0007669"/>
    <property type="project" value="UniProtKB-UniRule"/>
</dbReference>
<dbReference type="GO" id="GO:0002939">
    <property type="term" value="P:tRNA N1-guanine methylation"/>
    <property type="evidence" value="ECO:0007669"/>
    <property type="project" value="TreeGrafter"/>
</dbReference>
<dbReference type="CDD" id="cd18080">
    <property type="entry name" value="TrmD-like"/>
    <property type="match status" value="1"/>
</dbReference>
<dbReference type="FunFam" id="1.10.1270.20:FF:000001">
    <property type="entry name" value="tRNA (guanine-N(1)-)-methyltransferase"/>
    <property type="match status" value="1"/>
</dbReference>
<dbReference type="FunFam" id="3.40.1280.10:FF:000001">
    <property type="entry name" value="tRNA (guanine-N(1)-)-methyltransferase"/>
    <property type="match status" value="1"/>
</dbReference>
<dbReference type="Gene3D" id="3.40.1280.10">
    <property type="match status" value="1"/>
</dbReference>
<dbReference type="Gene3D" id="1.10.1270.20">
    <property type="entry name" value="tRNA(m1g37)methyltransferase, domain 2"/>
    <property type="match status" value="1"/>
</dbReference>
<dbReference type="HAMAP" id="MF_00605">
    <property type="entry name" value="TrmD"/>
    <property type="match status" value="1"/>
</dbReference>
<dbReference type="InterPro" id="IPR029028">
    <property type="entry name" value="Alpha/beta_knot_MTases"/>
</dbReference>
<dbReference type="InterPro" id="IPR023148">
    <property type="entry name" value="tRNA_m1G_MeTrfase_C_sf"/>
</dbReference>
<dbReference type="InterPro" id="IPR002649">
    <property type="entry name" value="tRNA_m1G_MeTrfase_TrmD"/>
</dbReference>
<dbReference type="InterPro" id="IPR029026">
    <property type="entry name" value="tRNA_m1G_MTases_N"/>
</dbReference>
<dbReference type="InterPro" id="IPR016009">
    <property type="entry name" value="tRNA_MeTrfase_TRMD/TRM10"/>
</dbReference>
<dbReference type="NCBIfam" id="NF000648">
    <property type="entry name" value="PRK00026.1"/>
    <property type="match status" value="1"/>
</dbReference>
<dbReference type="NCBIfam" id="TIGR00088">
    <property type="entry name" value="trmD"/>
    <property type="match status" value="1"/>
</dbReference>
<dbReference type="PANTHER" id="PTHR46417">
    <property type="entry name" value="TRNA (GUANINE-N(1)-)-METHYLTRANSFERASE"/>
    <property type="match status" value="1"/>
</dbReference>
<dbReference type="PANTHER" id="PTHR46417:SF1">
    <property type="entry name" value="TRNA (GUANINE-N(1)-)-METHYLTRANSFERASE"/>
    <property type="match status" value="1"/>
</dbReference>
<dbReference type="Pfam" id="PF01746">
    <property type="entry name" value="tRNA_m1G_MT"/>
    <property type="match status" value="1"/>
</dbReference>
<dbReference type="PIRSF" id="PIRSF000386">
    <property type="entry name" value="tRNA_mtase"/>
    <property type="match status" value="1"/>
</dbReference>
<dbReference type="SUPFAM" id="SSF75217">
    <property type="entry name" value="alpha/beta knot"/>
    <property type="match status" value="1"/>
</dbReference>
<reference key="1">
    <citation type="journal article" date="2008" name="DNA Res.">
        <title>Comparative genome analysis of Lactobacillus reuteri and Lactobacillus fermentum reveal a genomic island for reuterin and cobalamin production.</title>
        <authorList>
            <person name="Morita H."/>
            <person name="Toh H."/>
            <person name="Fukuda S."/>
            <person name="Horikawa H."/>
            <person name="Oshima K."/>
            <person name="Suzuki T."/>
            <person name="Murakami M."/>
            <person name="Hisamatsu S."/>
            <person name="Kato Y."/>
            <person name="Takizawa T."/>
            <person name="Fukuoka H."/>
            <person name="Yoshimura T."/>
            <person name="Itoh K."/>
            <person name="O'Sullivan D.J."/>
            <person name="McKay L.L."/>
            <person name="Ohno H."/>
            <person name="Kikuchi J."/>
            <person name="Masaoka T."/>
            <person name="Hattori M."/>
        </authorList>
    </citation>
    <scope>NUCLEOTIDE SEQUENCE [LARGE SCALE GENOMIC DNA]</scope>
    <source>
        <strain>NBRC 3956 / LMG 18251</strain>
    </source>
</reference>
<evidence type="ECO:0000255" key="1">
    <source>
        <dbReference type="HAMAP-Rule" id="MF_00605"/>
    </source>
</evidence>
<sequence>MRIDILSLFPDMFDATLGQSIVGRAQDDGFVDIKVTDFRQYTTDKHRHVDDAPFGGGAGMLLQAQPIFDAMDAIEQETKDTYPKGRVILMDPAGRRFDQDFAMELAQEEHLTFICGHYEGYDERIRQLVTDEASLGDYVLTGGELAAMVMVDATVRFVPGVLGNMSSPMGDSFSNGLLEYPQYTRPADFRGMKVPEVLTSGNHEKIREWRMRESLKRTLERRPDLLKNAKLSREQQIILQDLKLDLDPDAPK</sequence>
<organism>
    <name type="scientific">Limosilactobacillus fermentum (strain NBRC 3956 / LMG 18251)</name>
    <name type="common">Lactobacillus fermentum</name>
    <dbReference type="NCBI Taxonomy" id="334390"/>
    <lineage>
        <taxon>Bacteria</taxon>
        <taxon>Bacillati</taxon>
        <taxon>Bacillota</taxon>
        <taxon>Bacilli</taxon>
        <taxon>Lactobacillales</taxon>
        <taxon>Lactobacillaceae</taxon>
        <taxon>Limosilactobacillus</taxon>
    </lineage>
</organism>
<feature type="chain" id="PRO_1000130183" description="tRNA (guanine-N(1)-)-methyltransferase">
    <location>
        <begin position="1"/>
        <end position="252"/>
    </location>
</feature>
<feature type="binding site" evidence="1">
    <location>
        <position position="116"/>
    </location>
    <ligand>
        <name>S-adenosyl-L-methionine</name>
        <dbReference type="ChEBI" id="CHEBI:59789"/>
    </ligand>
</feature>
<feature type="binding site" evidence="1">
    <location>
        <begin position="135"/>
        <end position="140"/>
    </location>
    <ligand>
        <name>S-adenosyl-L-methionine</name>
        <dbReference type="ChEBI" id="CHEBI:59789"/>
    </ligand>
</feature>
<keyword id="KW-0963">Cytoplasm</keyword>
<keyword id="KW-0489">Methyltransferase</keyword>
<keyword id="KW-1185">Reference proteome</keyword>
<keyword id="KW-0949">S-adenosyl-L-methionine</keyword>
<keyword id="KW-0808">Transferase</keyword>
<keyword id="KW-0819">tRNA processing</keyword>
<protein>
    <recommendedName>
        <fullName evidence="1">tRNA (guanine-N(1)-)-methyltransferase</fullName>
        <ecNumber evidence="1">2.1.1.228</ecNumber>
    </recommendedName>
    <alternativeName>
        <fullName evidence="1">M1G-methyltransferase</fullName>
    </alternativeName>
    <alternativeName>
        <fullName evidence="1">tRNA [GM37] methyltransferase</fullName>
    </alternativeName>
</protein>
<name>TRMD_LIMF3</name>
<gene>
    <name evidence="1" type="primary">trmD</name>
    <name type="ordered locus">LAF_1221</name>
</gene>
<accession>B2GD25</accession>